<proteinExistence type="inferred from homology"/>
<keyword id="KW-0687">Ribonucleoprotein</keyword>
<keyword id="KW-0689">Ribosomal protein</keyword>
<evidence type="ECO:0000255" key="1">
    <source>
        <dbReference type="HAMAP-Rule" id="MF_00532"/>
    </source>
</evidence>
<evidence type="ECO:0000305" key="2"/>
<dbReference type="EMBL" id="CP000013">
    <property type="protein sequence ID" value="AAU07192.1"/>
    <property type="molecule type" value="Genomic_DNA"/>
</dbReference>
<dbReference type="RefSeq" id="WP_011193667.1">
    <property type="nucleotide sequence ID" value="NZ_CP028872.1"/>
</dbReference>
<dbReference type="SMR" id="Q661S9"/>
<dbReference type="GeneID" id="45161127"/>
<dbReference type="KEGG" id="bga:BG0339"/>
<dbReference type="eggNOG" id="COG0103">
    <property type="taxonomic scope" value="Bacteria"/>
</dbReference>
<dbReference type="HOGENOM" id="CLU_046483_2_1_12"/>
<dbReference type="OrthoDB" id="9803965at2"/>
<dbReference type="Proteomes" id="UP000002276">
    <property type="component" value="Chromosome"/>
</dbReference>
<dbReference type="GO" id="GO:0022627">
    <property type="term" value="C:cytosolic small ribosomal subunit"/>
    <property type="evidence" value="ECO:0007669"/>
    <property type="project" value="TreeGrafter"/>
</dbReference>
<dbReference type="GO" id="GO:0003723">
    <property type="term" value="F:RNA binding"/>
    <property type="evidence" value="ECO:0007669"/>
    <property type="project" value="TreeGrafter"/>
</dbReference>
<dbReference type="GO" id="GO:0003735">
    <property type="term" value="F:structural constituent of ribosome"/>
    <property type="evidence" value="ECO:0007669"/>
    <property type="project" value="InterPro"/>
</dbReference>
<dbReference type="GO" id="GO:0006412">
    <property type="term" value="P:translation"/>
    <property type="evidence" value="ECO:0007669"/>
    <property type="project" value="UniProtKB-UniRule"/>
</dbReference>
<dbReference type="FunFam" id="3.30.230.10:FF:000001">
    <property type="entry name" value="30S ribosomal protein S9"/>
    <property type="match status" value="1"/>
</dbReference>
<dbReference type="Gene3D" id="3.30.230.10">
    <property type="match status" value="1"/>
</dbReference>
<dbReference type="HAMAP" id="MF_00532_B">
    <property type="entry name" value="Ribosomal_uS9_B"/>
    <property type="match status" value="1"/>
</dbReference>
<dbReference type="InterPro" id="IPR020568">
    <property type="entry name" value="Ribosomal_Su5_D2-typ_SF"/>
</dbReference>
<dbReference type="InterPro" id="IPR000754">
    <property type="entry name" value="Ribosomal_uS9"/>
</dbReference>
<dbReference type="InterPro" id="IPR023035">
    <property type="entry name" value="Ribosomal_uS9_bac/plastid"/>
</dbReference>
<dbReference type="InterPro" id="IPR020574">
    <property type="entry name" value="Ribosomal_uS9_CS"/>
</dbReference>
<dbReference type="InterPro" id="IPR014721">
    <property type="entry name" value="Ribsml_uS5_D2-typ_fold_subgr"/>
</dbReference>
<dbReference type="NCBIfam" id="NF001099">
    <property type="entry name" value="PRK00132.1"/>
    <property type="match status" value="1"/>
</dbReference>
<dbReference type="PANTHER" id="PTHR21569">
    <property type="entry name" value="RIBOSOMAL PROTEIN S9"/>
    <property type="match status" value="1"/>
</dbReference>
<dbReference type="PANTHER" id="PTHR21569:SF1">
    <property type="entry name" value="SMALL RIBOSOMAL SUBUNIT PROTEIN US9M"/>
    <property type="match status" value="1"/>
</dbReference>
<dbReference type="Pfam" id="PF00380">
    <property type="entry name" value="Ribosomal_S9"/>
    <property type="match status" value="1"/>
</dbReference>
<dbReference type="SUPFAM" id="SSF54211">
    <property type="entry name" value="Ribosomal protein S5 domain 2-like"/>
    <property type="match status" value="1"/>
</dbReference>
<dbReference type="PROSITE" id="PS00360">
    <property type="entry name" value="RIBOSOMAL_S9"/>
    <property type="match status" value="1"/>
</dbReference>
<name>RS9_BORGP</name>
<sequence length="136" mass="15474">MKKSNFSNVNLSMGTGRRKSSVARVYIREGSGNIRVNNRDFDSYIQLENLRTMALSPLVLTNTLGKYDLYINVYGGGISGQSGAIRHGISRALFELDESNKMILRSNGFLTRDSRRVERKKFGQKKARKSFQFSKR</sequence>
<feature type="chain" id="PRO_1000051174" description="Small ribosomal subunit protein uS9">
    <location>
        <begin position="1"/>
        <end position="136"/>
    </location>
</feature>
<accession>Q661S9</accession>
<reference key="1">
    <citation type="journal article" date="2004" name="Nucleic Acids Res.">
        <title>Comparative analysis of the Borrelia garinii genome.</title>
        <authorList>
            <person name="Gloeckner G."/>
            <person name="Lehmann R."/>
            <person name="Romualdi A."/>
            <person name="Pradella S."/>
            <person name="Schulte-Spechtel U."/>
            <person name="Schilhabel M."/>
            <person name="Wilske B."/>
            <person name="Suehnel J."/>
            <person name="Platzer M."/>
        </authorList>
    </citation>
    <scope>NUCLEOTIDE SEQUENCE [LARGE SCALE GENOMIC DNA]</scope>
    <source>
        <strain>ATCC BAA-2496 / DSM 23469 / PBi</strain>
    </source>
</reference>
<gene>
    <name evidence="1" type="primary">rpsI</name>
    <name type="ordered locus">BG0339</name>
</gene>
<comment type="similarity">
    <text evidence="1">Belongs to the universal ribosomal protein uS9 family.</text>
</comment>
<organism>
    <name type="scientific">Borrelia garinii subsp. bavariensis (strain ATCC BAA-2496 / DSM 23469 / PBi)</name>
    <name type="common">Borreliella bavariensis</name>
    <dbReference type="NCBI Taxonomy" id="290434"/>
    <lineage>
        <taxon>Bacteria</taxon>
        <taxon>Pseudomonadati</taxon>
        <taxon>Spirochaetota</taxon>
        <taxon>Spirochaetia</taxon>
        <taxon>Spirochaetales</taxon>
        <taxon>Borreliaceae</taxon>
        <taxon>Borreliella</taxon>
    </lineage>
</organism>
<protein>
    <recommendedName>
        <fullName evidence="1">Small ribosomal subunit protein uS9</fullName>
    </recommendedName>
    <alternativeName>
        <fullName evidence="2">30S ribosomal protein S9</fullName>
    </alternativeName>
</protein>